<accession>P01258</accession>
<accession>B7ZL39</accession>
<accession>Q13935</accession>
<accession>Q13937</accession>
<accession>Q52LX7</accession>
<keyword id="KW-0002">3D-structure</keyword>
<keyword id="KW-0025">Alternative splicing</keyword>
<keyword id="KW-0027">Amidation</keyword>
<keyword id="KW-0165">Cleavage on pair of basic residues</keyword>
<keyword id="KW-0903">Direct protein sequencing</keyword>
<keyword id="KW-1015">Disulfide bond</keyword>
<keyword id="KW-0372">Hormone</keyword>
<keyword id="KW-0597">Phosphoprotein</keyword>
<keyword id="KW-1267">Proteomics identification</keyword>
<keyword id="KW-1185">Reference proteome</keyword>
<keyword id="KW-0964">Secreted</keyword>
<keyword id="KW-0732">Signal</keyword>
<evidence type="ECO:0000250" key="1">
    <source>
        <dbReference type="UniProtKB" id="P01257"/>
    </source>
</evidence>
<evidence type="ECO:0000255" key="2"/>
<evidence type="ECO:0000256" key="3">
    <source>
        <dbReference type="SAM" id="MobiDB-lite"/>
    </source>
</evidence>
<evidence type="ECO:0000269" key="4">
    <source>
    </source>
</evidence>
<evidence type="ECO:0000269" key="5">
    <source>
    </source>
</evidence>
<evidence type="ECO:0000269" key="6">
    <source>
    </source>
</evidence>
<evidence type="ECO:0000269" key="7">
    <source>
    </source>
</evidence>
<evidence type="ECO:0000269" key="8">
    <source>
    </source>
</evidence>
<evidence type="ECO:0000269" key="9">
    <source ref="6"/>
</evidence>
<evidence type="ECO:0000303" key="10">
    <source>
    </source>
</evidence>
<evidence type="ECO:0000303" key="11">
    <source>
    </source>
</evidence>
<evidence type="ECO:0000303" key="12">
    <source>
    </source>
</evidence>
<evidence type="ECO:0000305" key="13"/>
<evidence type="ECO:0000305" key="14">
    <source>
    </source>
</evidence>
<evidence type="ECO:0000312" key="15">
    <source>
        <dbReference type="HGNC" id="HGNC:1437"/>
    </source>
</evidence>
<evidence type="ECO:0007744" key="16">
    <source>
        <dbReference type="PDB" id="7TYH"/>
    </source>
</evidence>
<evidence type="ECO:0007744" key="17">
    <source>
        <dbReference type="PDB" id="7TYO"/>
    </source>
</evidence>
<evidence type="ECO:0007829" key="18">
    <source>
        <dbReference type="PDB" id="2JXZ"/>
    </source>
</evidence>
<evidence type="ECO:0007829" key="19">
    <source>
        <dbReference type="PDB" id="7TYO"/>
    </source>
</evidence>
<proteinExistence type="evidence at protein level"/>
<reference key="1">
    <citation type="journal article" date="1984" name="FEBS Lett.">
        <title>The complete sequence of human preprocalcitonin.</title>
        <authorList>
            <person name="le Moullec J.-M."/>
            <person name="Jullienne A."/>
            <person name="Chenais J."/>
            <person name="Lasmoles F."/>
            <person name="Guliana J.M."/>
            <person name="Milhaud G."/>
            <person name="Moukhtar M.S."/>
        </authorList>
    </citation>
    <scope>NUCLEOTIDE SEQUENCE [MRNA] (ISOFORM 1)</scope>
</reference>
<reference key="2">
    <citation type="journal article" date="1985" name="Proc. Natl. Acad. Sci. U.S.A.">
        <title>Alternative RNA processing events in human calcitonin/calcitonin gene-related peptide gene expression.</title>
        <authorList>
            <person name="Jonas V."/>
            <person name="Lin C.R."/>
            <person name="Kawashima E."/>
            <person name="Semon D."/>
            <person name="Swanson L.W."/>
            <person name="Mermod J.-J."/>
            <person name="Evans R.M."/>
            <person name="Rosenfeld M.G."/>
        </authorList>
    </citation>
    <scope>NUCLEOTIDE SEQUENCE [GENOMIC DNA]</scope>
</reference>
<reference key="3">
    <citation type="journal article" date="1986" name="Biochem. Soc. Symp.">
        <title>Expression and function of the human calcitonin/alpha-CGRP gene in health and disease.</title>
        <authorList>
            <person name="Craig R.K."/>
            <person name="Riley J.H."/>
            <person name="Edbrooke M.R."/>
            <person name="Broad P.M."/>
            <person name="Foord S.M."/>
            <person name="Al-Kazwini S.J."/>
            <person name="Holman J.J."/>
            <person name="Marshall I."/>
        </authorList>
    </citation>
    <scope>NUCLEOTIDE SEQUENCE [MRNA] (ISOFORM 1)</scope>
</reference>
<reference key="4">
    <citation type="journal article" date="1986" name="FEBS Lett.">
        <title>Ectopic synthesis of high-Mr calcitonin by the BEN lung carcinoma cell line reflects aberrant proteolytic processing.</title>
        <authorList>
            <person name="Riley J.H."/>
            <person name="Edbrooke M.R."/>
            <person name="Craig R.K."/>
        </authorList>
    </citation>
    <scope>NUCLEOTIDE SEQUENCE [MRNA] (ISOFORM 1)</scope>
</reference>
<reference key="5">
    <citation type="journal article" date="1991" name="J. Biol. Chem.">
        <title>A novel calcitonin carboxyl-terminal peptide produced in medullary thyroid carcinoma by alternative RNA processing of the calcitonin/calcitonin gene-related peptide gene.</title>
        <authorList>
            <person name="Minvielle S."/>
            <person name="Giscard-Dartevelle S."/>
            <person name="Cohen R."/>
            <person name="Taboulet J."/>
            <person name="Labye F."/>
            <person name="Jullienne A."/>
            <person name="Rivaille P."/>
            <person name="Milhaud G."/>
            <person name="Moukhtar M.S."/>
            <person name="Lasmoles F."/>
        </authorList>
    </citation>
    <scope>NUCLEOTIDE SEQUENCE [MRNA] (ISOFORM 2)</scope>
    <source>
        <tissue>Thyroid carcinoma</tissue>
    </source>
</reference>
<reference key="6">
    <citation type="submission" date="2005-05" db="EMBL/GenBank/DDBJ databases">
        <authorList>
            <consortium name="NIEHS SNPs program"/>
        </authorList>
    </citation>
    <scope>NUCLEOTIDE SEQUENCE [GENOMIC DNA]</scope>
    <scope>VARIANTS ARG-2; LYS-67; ARG-76; THR-123 AND PRO-138</scope>
</reference>
<reference key="7">
    <citation type="journal article" date="2006" name="Nature">
        <title>Human chromosome 11 DNA sequence and analysis including novel gene identification.</title>
        <authorList>
            <person name="Taylor T.D."/>
            <person name="Noguchi H."/>
            <person name="Totoki Y."/>
            <person name="Toyoda A."/>
            <person name="Kuroki Y."/>
            <person name="Dewar K."/>
            <person name="Lloyd C."/>
            <person name="Itoh T."/>
            <person name="Takeda T."/>
            <person name="Kim D.-W."/>
            <person name="She X."/>
            <person name="Barlow K.F."/>
            <person name="Bloom T."/>
            <person name="Bruford E."/>
            <person name="Chang J.L."/>
            <person name="Cuomo C.A."/>
            <person name="Eichler E."/>
            <person name="FitzGerald M.G."/>
            <person name="Jaffe D.B."/>
            <person name="LaButti K."/>
            <person name="Nicol R."/>
            <person name="Park H.-S."/>
            <person name="Seaman C."/>
            <person name="Sougnez C."/>
            <person name="Yang X."/>
            <person name="Zimmer A.R."/>
            <person name="Zody M.C."/>
            <person name="Birren B.W."/>
            <person name="Nusbaum C."/>
            <person name="Fujiyama A."/>
            <person name="Hattori M."/>
            <person name="Rogers J."/>
            <person name="Lander E.S."/>
            <person name="Sakaki Y."/>
        </authorList>
    </citation>
    <scope>NUCLEOTIDE SEQUENCE [LARGE SCALE GENOMIC DNA]</scope>
</reference>
<reference key="8">
    <citation type="submission" date="2005-09" db="EMBL/GenBank/DDBJ databases">
        <authorList>
            <person name="Mural R.J."/>
            <person name="Istrail S."/>
            <person name="Sutton G.G."/>
            <person name="Florea L."/>
            <person name="Halpern A.L."/>
            <person name="Mobarry C.M."/>
            <person name="Lippert R."/>
            <person name="Walenz B."/>
            <person name="Shatkay H."/>
            <person name="Dew I."/>
            <person name="Miller J.R."/>
            <person name="Flanigan M.J."/>
            <person name="Edwards N.J."/>
            <person name="Bolanos R."/>
            <person name="Fasulo D."/>
            <person name="Halldorsson B.V."/>
            <person name="Hannenhalli S."/>
            <person name="Turner R."/>
            <person name="Yooseph S."/>
            <person name="Lu F."/>
            <person name="Nusskern D.R."/>
            <person name="Shue B.C."/>
            <person name="Zheng X.H."/>
            <person name="Zhong F."/>
            <person name="Delcher A.L."/>
            <person name="Huson D.H."/>
            <person name="Kravitz S.A."/>
            <person name="Mouchard L."/>
            <person name="Reinert K."/>
            <person name="Remington K.A."/>
            <person name="Clark A.G."/>
            <person name="Waterman M.S."/>
            <person name="Eichler E.E."/>
            <person name="Adams M.D."/>
            <person name="Hunkapiller M.W."/>
            <person name="Myers E.W."/>
            <person name="Venter J.C."/>
        </authorList>
    </citation>
    <scope>NUCLEOTIDE SEQUENCE [LARGE SCALE GENOMIC DNA]</scope>
</reference>
<reference key="9">
    <citation type="journal article" date="2004" name="Genome Res.">
        <title>The status, quality, and expansion of the NIH full-length cDNA project: the Mammalian Gene Collection (MGC).</title>
        <authorList>
            <consortium name="The MGC Project Team"/>
        </authorList>
    </citation>
    <scope>NUCLEOTIDE SEQUENCE [LARGE SCALE MRNA] (ISOFORM 1)</scope>
    <source>
        <tissue>Placenta</tissue>
    </source>
</reference>
<reference key="10">
    <citation type="journal article" date="1984" name="Biochem. Biophys. Res. Commun.">
        <title>Structure and expression of a gene encoding human calcitonin and calcitonin gene related peptide.</title>
        <authorList>
            <person name="Nelkin B.D."/>
            <person name="Rosenfeld K.I."/>
            <person name="de Bustros A."/>
            <person name="Leong S.S."/>
            <person name="Roos B.A."/>
            <person name="Baylin S.B."/>
        </authorList>
    </citation>
    <scope>NUCLEOTIDE SEQUENCE [MRNA] OF 48-83 (ISOFORM 1)</scope>
</reference>
<reference key="11">
    <citation type="journal article" date="1985" name="EMBO J.">
        <title>Expression of the human calcitonin/CGRP gene in lung and thyroid carcinoma.</title>
        <authorList>
            <person name="Edbrooke M.R."/>
            <person name="Parker D."/>
            <person name="McVey J.H."/>
            <person name="Riley J.H."/>
            <person name="Sorenson G.D."/>
            <person name="Pettengill O.S."/>
            <person name="Craig R.K."/>
        </authorList>
    </citation>
    <scope>NUCLEOTIDE SEQUENCE [MRNA] OF 50-141 (ISOFORM 1)</scope>
</reference>
<reference key="12">
    <citation type="journal article" date="1968" name="Helv. Chim. Acta">
        <title>Human calcitonin. Structure of calcitonin M and D.</title>
        <authorList>
            <person name="Neher R."/>
            <person name="Riniker B."/>
            <person name="Rittel W."/>
            <person name="Zuber H."/>
        </authorList>
    </citation>
    <scope>PROTEIN SEQUENCE OF 85-116</scope>
    <scope>AMIDATION AT PRO-116</scope>
</reference>
<reference key="13">
    <citation type="journal article" date="1991" name="Biochemistry">
        <title>A 1H NMR study of human calcitonin in solution.</title>
        <authorList>
            <person name="Motta A."/>
            <person name="Temussi P.A."/>
            <person name="Wunsch E."/>
            <person name="Bovermann G."/>
        </authorList>
    </citation>
    <scope>STRUCTURE BY NMR OF CALCITONIN</scope>
</reference>
<reference key="14">
    <citation type="journal article" date="1983" name="Lancet">
        <title>Katacalcin: a new plasma calcium-lowering hormone.</title>
        <authorList>
            <person name="Hillyard C.J."/>
            <person name="Myers C."/>
            <person name="Abeyasekera G."/>
            <person name="Stevvensvenson J.C."/>
            <person name="Craig R.K."/>
            <person name="MacIntyre I."/>
        </authorList>
    </citation>
    <scope>FUNCTION</scope>
    <scope>CHARACTERIZATION OF KATACALCIN</scope>
</reference>
<reference key="15">
    <citation type="journal article" date="2004" name="Genome Biol.">
        <title>An unappreciated role for RNA surveillance.</title>
        <authorList>
            <person name="Hillman R.T."/>
            <person name="Green R.E."/>
            <person name="Brenner S.E."/>
        </authorList>
    </citation>
    <scope>SPLICE ISOFORM(S) THAT ARE POTENTIAL NMD TARGET(S)</scope>
</reference>
<reference evidence="16 17" key="16">
    <citation type="journal article" date="2022" name="Science">
        <title>A structural basis for amylin receptor phenotype.</title>
        <authorList>
            <person name="Cao J."/>
            <person name="Belousoff M.J."/>
            <person name="Liang Y.L."/>
            <person name="Johnson R.M."/>
            <person name="Josephs T.M."/>
            <person name="Fletcher M.M."/>
            <person name="Christopoulos A."/>
            <person name="Hay D.L."/>
            <person name="Danev R."/>
            <person name="Wootten D."/>
            <person name="Sexton P.M."/>
        </authorList>
    </citation>
    <scope>STRUCTURE BY ELECTRON MICROSCOPY (2.70 ANGSTROMS) OF 85-116 IN COMPLEX WITH CALCR; RAMP2 AND G PROTEINS</scope>
    <scope>DISULFIDE BOND</scope>
    <scope>FUNCTION</scope>
</reference>
<organism>
    <name type="scientific">Homo sapiens</name>
    <name type="common">Human</name>
    <dbReference type="NCBI Taxonomy" id="9606"/>
    <lineage>
        <taxon>Eukaryota</taxon>
        <taxon>Metazoa</taxon>
        <taxon>Chordata</taxon>
        <taxon>Craniata</taxon>
        <taxon>Vertebrata</taxon>
        <taxon>Euteleostomi</taxon>
        <taxon>Mammalia</taxon>
        <taxon>Eutheria</taxon>
        <taxon>Euarchontoglires</taxon>
        <taxon>Primates</taxon>
        <taxon>Haplorrhini</taxon>
        <taxon>Catarrhini</taxon>
        <taxon>Hominidae</taxon>
        <taxon>Homo</taxon>
    </lineage>
</organism>
<feature type="signal peptide" evidence="2">
    <location>
        <begin position="1"/>
        <end position="25"/>
    </location>
</feature>
<feature type="propeptide" id="PRO_0000004050">
    <location>
        <begin position="26"/>
        <end position="82"/>
    </location>
</feature>
<feature type="peptide" id="PRO_0000004051" description="Calcitonin" evidence="6">
    <location>
        <begin position="85"/>
        <end position="116"/>
    </location>
</feature>
<feature type="peptide" id="PRO_0000004052" description="Katacalcin">
    <location>
        <begin position="121"/>
        <end position="141"/>
    </location>
</feature>
<feature type="region of interest" description="Disordered" evidence="3">
    <location>
        <begin position="64"/>
        <end position="85"/>
    </location>
</feature>
<feature type="region of interest" description="Disordered" evidence="3">
    <location>
        <begin position="111"/>
        <end position="141"/>
    </location>
</feature>
<feature type="compositionally biased region" description="Basic and acidic residues" evidence="3">
    <location>
        <begin position="118"/>
        <end position="132"/>
    </location>
</feature>
<feature type="modified residue" description="Phosphoserine" evidence="1">
    <location>
        <position position="43"/>
    </location>
</feature>
<feature type="modified residue" description="Proline amide" evidence="6">
    <location>
        <position position="116"/>
    </location>
</feature>
<feature type="disulfide bond" evidence="4 6">
    <location>
        <begin position="85"/>
        <end position="91"/>
    </location>
</feature>
<feature type="splice variant" id="VSP_000709" description="In isoform 2." evidence="10">
    <original>VSMPQNAN</original>
    <variation>NHCPEESL</variation>
    <location>
        <begin position="134"/>
        <end position="141"/>
    </location>
</feature>
<feature type="sequence variant" id="VAR_025271" description="In dbSNP:rs34587547." evidence="9">
    <original>G</original>
    <variation>R</variation>
    <location>
        <position position="2"/>
    </location>
</feature>
<feature type="sequence variant" id="VAR_014592" description="In dbSNP:rs5239.">
    <original>D</original>
    <variation>N</variation>
    <location>
        <position position="57"/>
    </location>
</feature>
<feature type="sequence variant" id="VAR_025272" description="In dbSNP:rs34164367." evidence="9">
    <original>E</original>
    <variation>K</variation>
    <location>
        <position position="67"/>
    </location>
</feature>
<feature type="sequence variant" id="VAR_014593" description="In dbSNP:rs5241." evidence="9">
    <original>S</original>
    <variation>R</variation>
    <location>
        <position position="76"/>
    </location>
</feature>
<feature type="sequence variant" id="VAR_025273" description="In dbSNP:rs34414857." evidence="9">
    <original>S</original>
    <variation>T</variation>
    <location>
        <position position="123"/>
    </location>
</feature>
<feature type="sequence variant" id="VAR_025274" description="In dbSNP:rs13306224." evidence="9">
    <original>Q</original>
    <variation>P</variation>
    <location>
        <position position="138"/>
    </location>
</feature>
<feature type="sequence conflict" description="In Ref. 2; AAA51913." evidence="13" ref="2">
    <original>M</original>
    <variation>I</variation>
    <location>
        <position position="92"/>
    </location>
</feature>
<feature type="helix" evidence="19">
    <location>
        <begin position="92"/>
        <end position="101"/>
    </location>
</feature>
<feature type="turn" evidence="19">
    <location>
        <begin position="102"/>
        <end position="104"/>
    </location>
</feature>
<feature type="helix" evidence="18">
    <location>
        <begin position="109"/>
        <end position="111"/>
    </location>
</feature>
<protein>
    <recommendedName>
        <fullName evidence="12">Calcitonin</fullName>
    </recommendedName>
    <component>
        <recommendedName>
            <fullName evidence="12">Calcitonin</fullName>
            <shortName evidence="12">CT</shortName>
        </recommendedName>
    </component>
    <component>
        <recommendedName>
            <fullName evidence="11">Katacalcin</fullName>
        </recommendedName>
        <alternativeName>
            <fullName>Calcitonin carboxyl-terminal peptide</fullName>
            <shortName>CCP</shortName>
        </alternativeName>
        <alternativeName>
            <fullName>PDN-21</fullName>
        </alternativeName>
    </component>
</protein>
<comment type="function">
    <molecule>Calcitonin</molecule>
    <text evidence="4">Calcitonin is a peptide hormone that causes a rapid but short-lived drop in the level of calcium and phosphate in blood by promoting the incorporation of those ions in the bones. Calcitonin function is mediated by the calcitonin receptor/CALCR and the CALCR-RAMP2 (AMYR2) receptor complex (PubMed:35324283).</text>
</comment>
<comment type="function">
    <molecule>Katacalcin</molecule>
    <text evidence="7">Katacalcin is a potent plasma calcium-lowering peptide.</text>
</comment>
<comment type="interaction">
    <interactant intactId="EBI-1018474">
        <id>P01258</id>
    </interactant>
    <interactant intactId="EBI-17183751">
        <id>X5D778</id>
        <label>ANKRD11</label>
    </interactant>
    <organismsDiffer>false</organismsDiffer>
    <experiments>3</experiments>
</comment>
<comment type="interaction">
    <interactant intactId="EBI-1018474">
        <id>P01258</id>
    </interactant>
    <interactant intactId="EBI-1174243">
        <id>Q01814</id>
        <label>ATP2B2</label>
    </interactant>
    <organismsDiffer>false</organismsDiffer>
    <experiments>2</experiments>
</comment>
<comment type="interaction">
    <interactant intactId="EBI-1018474">
        <id>P01258</id>
    </interactant>
    <interactant intactId="EBI-1174388">
        <id>P23634</id>
        <label>ATP2B4</label>
    </interactant>
    <organismsDiffer>false</organismsDiffer>
    <experiments>2</experiments>
</comment>
<comment type="interaction">
    <interactant intactId="EBI-1018474">
        <id>P01258</id>
    </interactant>
    <interactant intactId="EBI-1018474">
        <id>P01258</id>
        <label>CALCA</label>
    </interactant>
    <organismsDiffer>false</organismsDiffer>
    <experiments>3</experiments>
</comment>
<comment type="subcellular location">
    <subcellularLocation>
        <location>Secreted</location>
    </subcellularLocation>
</comment>
<comment type="alternative products">
    <event type="alternative splicing"/>
    <isoform>
        <id>P01258-1</id>
        <name>1</name>
        <sequence type="displayed"/>
    </isoform>
    <isoform>
        <id>P01258-2</id>
        <name>2</name>
        <sequence type="described" ref="VSP_000709"/>
    </isoform>
    <isoform>
        <id>P06881-1</id>
        <name>3</name>
        <sequence type="external"/>
    </isoform>
</comment>
<comment type="miscellaneous">
    <text evidence="5 8">The CALCA gene (HGNC:1437) encodes a small family of peptides including calcitonin (UniProtKB:P01258), its C-terminal flanking peptide katacalcin (UniProtKB:P01258) and the calcitonin gene-related peptide/CGRP1 (UniProtKB:P06881).</text>
</comment>
<comment type="miscellaneous">
    <molecule>Isoform 2</molecule>
    <text evidence="14">May be produced at very low levels due to a premature stop codon in the mRNA, leading to nonsense-mediated mRNA decay.</text>
</comment>
<comment type="similarity">
    <text evidence="13">Belongs to the calcitonin family.</text>
</comment>
<comment type="online information" name="Wikipedia">
    <link uri="https://en.wikipedia.org/wiki/Calcitonin"/>
    <text>Calcitonin entry</text>
</comment>
<dbReference type="EMBL" id="X00356">
    <property type="protein sequence ID" value="CAA25103.1"/>
    <property type="molecule type" value="mRNA"/>
</dbReference>
<dbReference type="EMBL" id="M12666">
    <property type="protein sequence ID" value="AAA51913.1"/>
    <property type="molecule type" value="Genomic_DNA"/>
</dbReference>
<dbReference type="EMBL" id="M12664">
    <property type="protein sequence ID" value="AAA51913.1"/>
    <property type="status" value="JOINED"/>
    <property type="molecule type" value="Genomic_DNA"/>
</dbReference>
<dbReference type="EMBL" id="M12665">
    <property type="protein sequence ID" value="AAA51913.1"/>
    <property type="status" value="JOINED"/>
    <property type="molecule type" value="Genomic_DNA"/>
</dbReference>
<dbReference type="EMBL" id="M26095">
    <property type="protein sequence ID" value="AAA35501.1"/>
    <property type="molecule type" value="mRNA"/>
</dbReference>
<dbReference type="EMBL" id="X03662">
    <property type="protein sequence ID" value="CAA27299.1"/>
    <property type="molecule type" value="mRNA"/>
</dbReference>
<dbReference type="EMBL" id="M64486">
    <property type="protein sequence ID" value="AAA58403.1"/>
    <property type="molecule type" value="mRNA"/>
</dbReference>
<dbReference type="EMBL" id="DQ080435">
    <property type="protein sequence ID" value="AAY68212.1"/>
    <property type="molecule type" value="Genomic_DNA"/>
</dbReference>
<dbReference type="EMBL" id="AC090835">
    <property type="status" value="NOT_ANNOTATED_CDS"/>
    <property type="molecule type" value="Genomic_DNA"/>
</dbReference>
<dbReference type="EMBL" id="CH471064">
    <property type="protein sequence ID" value="EAW68468.1"/>
    <property type="molecule type" value="Genomic_DNA"/>
</dbReference>
<dbReference type="EMBL" id="BC069684">
    <property type="protein sequence ID" value="AAH69684.1"/>
    <property type="molecule type" value="mRNA"/>
</dbReference>
<dbReference type="EMBL" id="BC069704">
    <property type="protein sequence ID" value="AAH69704.1"/>
    <property type="molecule type" value="mRNA"/>
</dbReference>
<dbReference type="EMBL" id="BC069760">
    <property type="protein sequence ID" value="AAH69760.1"/>
    <property type="molecule type" value="mRNA"/>
</dbReference>
<dbReference type="EMBL" id="BC069778">
    <property type="protein sequence ID" value="AAH69778.1"/>
    <property type="molecule type" value="mRNA"/>
</dbReference>
<dbReference type="EMBL" id="BC093753">
    <property type="protein sequence ID" value="AAH93753.1"/>
    <property type="molecule type" value="mRNA"/>
</dbReference>
<dbReference type="EMBL" id="BC101599">
    <property type="protein sequence ID" value="AAI01600.1"/>
    <property type="molecule type" value="mRNA"/>
</dbReference>
<dbReference type="EMBL" id="BC143562">
    <property type="protein sequence ID" value="AAI43563.1"/>
    <property type="molecule type" value="mRNA"/>
</dbReference>
<dbReference type="EMBL" id="K03513">
    <property type="protein sequence ID" value="AAA52124.1"/>
    <property type="molecule type" value="mRNA"/>
</dbReference>
<dbReference type="EMBL" id="X02330">
    <property type="protein sequence ID" value="CAA26189.1"/>
    <property type="molecule type" value="mRNA"/>
</dbReference>
<dbReference type="CCDS" id="CCDS7819.1">
    <molecule id="P01258-1"/>
</dbReference>
<dbReference type="PIR" id="A41716">
    <property type="entry name" value="A41716"/>
</dbReference>
<dbReference type="PIR" id="S07643">
    <property type="entry name" value="TCHU"/>
</dbReference>
<dbReference type="RefSeq" id="NP_001029124.1">
    <molecule id="P01258-1"/>
    <property type="nucleotide sequence ID" value="NM_001033952.3"/>
</dbReference>
<dbReference type="RefSeq" id="NP_001365878.1">
    <molecule id="P01258-1"/>
    <property type="nucleotide sequence ID" value="NM_001378949.1"/>
</dbReference>
<dbReference type="RefSeq" id="NP_001732.1">
    <molecule id="P01258-1"/>
    <property type="nucleotide sequence ID" value="NM_001741.3"/>
</dbReference>
<dbReference type="RefSeq" id="XP_016873772.1">
    <property type="nucleotide sequence ID" value="XM_017018283.1"/>
</dbReference>
<dbReference type="RefSeq" id="XP_016873773.1">
    <property type="nucleotide sequence ID" value="XM_017018284.1"/>
</dbReference>
<dbReference type="RefSeq" id="XP_054225903.1">
    <molecule id="P01258-1"/>
    <property type="nucleotide sequence ID" value="XM_054369928.1"/>
</dbReference>
<dbReference type="RefSeq" id="XP_054225904.1">
    <molecule id="P01258-1"/>
    <property type="nucleotide sequence ID" value="XM_054369929.1"/>
</dbReference>
<dbReference type="PDB" id="2JXZ">
    <property type="method" value="NMR"/>
    <property type="chains" value="A=85-116"/>
</dbReference>
<dbReference type="PDB" id="7TYH">
    <property type="method" value="EM"/>
    <property type="resolution" value="3.30 A"/>
    <property type="chains" value="P=85-116"/>
</dbReference>
<dbReference type="PDB" id="7TYO">
    <property type="method" value="EM"/>
    <property type="resolution" value="2.70 A"/>
    <property type="chains" value="P=85-116"/>
</dbReference>
<dbReference type="PDBsum" id="2JXZ"/>
<dbReference type="PDBsum" id="7TYH"/>
<dbReference type="PDBsum" id="7TYO"/>
<dbReference type="BMRB" id="P01258"/>
<dbReference type="EMDB" id="EMD-26179"/>
<dbReference type="EMDB" id="EMD-26190"/>
<dbReference type="SMR" id="P01258"/>
<dbReference type="BioGRID" id="107247">
    <property type="interactions" value="18"/>
</dbReference>
<dbReference type="FunCoup" id="P01258">
    <property type="interactions" value="782"/>
</dbReference>
<dbReference type="IntAct" id="P01258">
    <property type="interactions" value="11"/>
</dbReference>
<dbReference type="MINT" id="P01258"/>
<dbReference type="STRING" id="9606.ENSP00000331746"/>
<dbReference type="GlyGen" id="P01258">
    <property type="glycosylation" value="3 sites, 1 O-linked glycan (3 sites)"/>
</dbReference>
<dbReference type="iPTMnet" id="P01258"/>
<dbReference type="MetOSite" id="P01258"/>
<dbReference type="PhosphoSitePlus" id="P01258"/>
<dbReference type="BioMuta" id="CALCA"/>
<dbReference type="DMDM" id="322510018"/>
<dbReference type="MassIVE" id="P01258"/>
<dbReference type="PaxDb" id="9606-ENSP00000331746"/>
<dbReference type="PeptideAtlas" id="P01258"/>
<dbReference type="ProteomicsDB" id="51362">
    <molecule id="P01258-1"/>
</dbReference>
<dbReference type="ProteomicsDB" id="51363">
    <molecule id="P01258-2"/>
</dbReference>
<dbReference type="TopDownProteomics" id="P01258-1">
    <molecule id="P01258-1"/>
</dbReference>
<dbReference type="ABCD" id="P01258">
    <property type="antibodies" value="3 sequenced antibodies"/>
</dbReference>
<dbReference type="Antibodypedia" id="3493">
    <property type="antibodies" value="1815 antibodies from 50 providers"/>
</dbReference>
<dbReference type="DNASU" id="796"/>
<dbReference type="Ensembl" id="ENST00000331587.9">
    <molecule id="P01258-1"/>
    <property type="protein sequence ID" value="ENSP00000331746.4"/>
    <property type="gene ID" value="ENSG00000110680.14"/>
</dbReference>
<dbReference type="Ensembl" id="ENST00000396372.2">
    <molecule id="P01258-1"/>
    <property type="protein sequence ID" value="ENSP00000379657.2"/>
    <property type="gene ID" value="ENSG00000110680.14"/>
</dbReference>
<dbReference type="Ensembl" id="ENST00000469608.5">
    <molecule id="P01258-2"/>
    <property type="protein sequence ID" value="ENSP00000420618.1"/>
    <property type="gene ID" value="ENSG00000110680.14"/>
</dbReference>
<dbReference type="GeneID" id="796"/>
<dbReference type="KEGG" id="hsa:796"/>
<dbReference type="MANE-Select" id="ENST00000331587.9">
    <property type="protein sequence ID" value="ENSP00000331746.4"/>
    <property type="RefSeq nucleotide sequence ID" value="NM_001741.3"/>
    <property type="RefSeq protein sequence ID" value="NP_001732.1"/>
</dbReference>
<dbReference type="UCSC" id="uc001mlv.2">
    <molecule id="P01258-1"/>
    <property type="organism name" value="human"/>
</dbReference>
<dbReference type="AGR" id="HGNC:1437"/>
<dbReference type="CTD" id="796"/>
<dbReference type="DisGeNET" id="796"/>
<dbReference type="GeneCards" id="CALCA"/>
<dbReference type="HGNC" id="HGNC:1437">
    <property type="gene designation" value="CALCA"/>
</dbReference>
<dbReference type="HPA" id="ENSG00000110680">
    <property type="expression patterns" value="Tissue enhanced (parathyroid gland, thyroid gland)"/>
</dbReference>
<dbReference type="MalaCards" id="CALCA"/>
<dbReference type="MIM" id="114130">
    <property type="type" value="gene"/>
</dbReference>
<dbReference type="neXtProt" id="NX_P01258"/>
<dbReference type="OpenTargets" id="ENSG00000110680"/>
<dbReference type="PharmGKB" id="PA26029"/>
<dbReference type="VEuPathDB" id="HostDB:ENSG00000110680"/>
<dbReference type="eggNOG" id="ENOG502RZI5">
    <property type="taxonomic scope" value="Eukaryota"/>
</dbReference>
<dbReference type="GeneTree" id="ENSGT00940000162876"/>
<dbReference type="HOGENOM" id="CLU_122444_0_0_1"/>
<dbReference type="InParanoid" id="P01258"/>
<dbReference type="OrthoDB" id="9929923at2759"/>
<dbReference type="PAN-GO" id="P01258">
    <property type="GO annotations" value="4 GO annotations based on evolutionary models"/>
</dbReference>
<dbReference type="PhylomeDB" id="P01258"/>
<dbReference type="TreeFam" id="TF333069"/>
<dbReference type="PathwayCommons" id="P01258"/>
<dbReference type="Reactome" id="R-HSA-418555">
    <property type="pathway name" value="G alpha (s) signalling events"/>
</dbReference>
<dbReference type="Reactome" id="R-HSA-419812">
    <property type="pathway name" value="Calcitonin-like ligand receptors"/>
</dbReference>
<dbReference type="Reactome" id="R-HSA-977225">
    <property type="pathway name" value="Amyloid fiber formation"/>
</dbReference>
<dbReference type="SignaLink" id="P01258"/>
<dbReference type="BioGRID-ORCS" id="796">
    <property type="hits" value="15 hits in 1146 CRISPR screens"/>
</dbReference>
<dbReference type="ChiTaRS" id="CALCA">
    <property type="organism name" value="human"/>
</dbReference>
<dbReference type="EvolutionaryTrace" id="P01258"/>
<dbReference type="GeneWiki" id="Calcitonin"/>
<dbReference type="GenomeRNAi" id="796"/>
<dbReference type="Pharos" id="P01258">
    <property type="development level" value="Tbio"/>
</dbReference>
<dbReference type="Proteomes" id="UP000005640">
    <property type="component" value="Chromosome 11"/>
</dbReference>
<dbReference type="RNAct" id="P01258">
    <property type="molecule type" value="protein"/>
</dbReference>
<dbReference type="Bgee" id="ENSG00000110680">
    <property type="expression patterns" value="Expressed in dorsal root ganglion and 124 other cell types or tissues"/>
</dbReference>
<dbReference type="ExpressionAtlas" id="P01258">
    <property type="expression patterns" value="baseline and differential"/>
</dbReference>
<dbReference type="GO" id="GO:0030424">
    <property type="term" value="C:axon"/>
    <property type="evidence" value="ECO:0007669"/>
    <property type="project" value="Ensembl"/>
</dbReference>
<dbReference type="GO" id="GO:0005576">
    <property type="term" value="C:extracellular region"/>
    <property type="evidence" value="ECO:0000304"/>
    <property type="project" value="Reactome"/>
</dbReference>
<dbReference type="GO" id="GO:0005615">
    <property type="term" value="C:extracellular space"/>
    <property type="evidence" value="ECO:0000314"/>
    <property type="project" value="UniProtKB"/>
</dbReference>
<dbReference type="GO" id="GO:0098686">
    <property type="term" value="C:hippocampal mossy fiber to CA3 synapse"/>
    <property type="evidence" value="ECO:0007669"/>
    <property type="project" value="Ensembl"/>
</dbReference>
<dbReference type="GO" id="GO:0043025">
    <property type="term" value="C:neuronal cell body"/>
    <property type="evidence" value="ECO:0007669"/>
    <property type="project" value="Ensembl"/>
</dbReference>
<dbReference type="GO" id="GO:0098992">
    <property type="term" value="C:neuronal dense core vesicle"/>
    <property type="evidence" value="ECO:0007669"/>
    <property type="project" value="Ensembl"/>
</dbReference>
<dbReference type="GO" id="GO:0031716">
    <property type="term" value="F:calcitonin receptor binding"/>
    <property type="evidence" value="ECO:0000353"/>
    <property type="project" value="UniProtKB"/>
</dbReference>
<dbReference type="GO" id="GO:0005179">
    <property type="term" value="F:hormone activity"/>
    <property type="evidence" value="ECO:0000314"/>
    <property type="project" value="UniProt"/>
</dbReference>
<dbReference type="GO" id="GO:0042802">
    <property type="term" value="F:identical protein binding"/>
    <property type="evidence" value="ECO:0000353"/>
    <property type="project" value="IntAct"/>
</dbReference>
<dbReference type="GO" id="GO:0032147">
    <property type="term" value="P:activation of protein kinase activity"/>
    <property type="evidence" value="ECO:0000314"/>
    <property type="project" value="UniProtKB"/>
</dbReference>
<dbReference type="GO" id="GO:0007189">
    <property type="term" value="P:adenylate cyclase-activating G protein-coupled receptor signaling pathway"/>
    <property type="evidence" value="ECO:0000314"/>
    <property type="project" value="UniProtKB"/>
</dbReference>
<dbReference type="GO" id="GO:0150060">
    <property type="term" value="P:amylin receptor 2 signaling pathway"/>
    <property type="evidence" value="ECO:0000314"/>
    <property type="project" value="UniProt"/>
</dbReference>
<dbReference type="GO" id="GO:0097646">
    <property type="term" value="P:calcitonin family receptor signaling pathway"/>
    <property type="evidence" value="ECO:0000314"/>
    <property type="project" value="UniProt"/>
</dbReference>
<dbReference type="GO" id="GO:1990090">
    <property type="term" value="P:cellular response to nerve growth factor stimulus"/>
    <property type="evidence" value="ECO:0007669"/>
    <property type="project" value="Ensembl"/>
</dbReference>
<dbReference type="GO" id="GO:0071356">
    <property type="term" value="P:cellular response to tumor necrosis factor"/>
    <property type="evidence" value="ECO:0007669"/>
    <property type="project" value="Ensembl"/>
</dbReference>
<dbReference type="GO" id="GO:0007566">
    <property type="term" value="P:embryo implantation"/>
    <property type="evidence" value="ECO:0000314"/>
    <property type="project" value="UniProtKB"/>
</dbReference>
<dbReference type="GO" id="GO:0002548">
    <property type="term" value="P:monocyte chemotaxis"/>
    <property type="evidence" value="ECO:0000314"/>
    <property type="project" value="BHF-UCL"/>
</dbReference>
<dbReference type="GO" id="GO:0045776">
    <property type="term" value="P:negative regulation of blood pressure"/>
    <property type="evidence" value="ECO:0007669"/>
    <property type="project" value="Ensembl"/>
</dbReference>
<dbReference type="GO" id="GO:0045779">
    <property type="term" value="P:negative regulation of bone resorption"/>
    <property type="evidence" value="ECO:0000314"/>
    <property type="project" value="UniProtKB"/>
</dbReference>
<dbReference type="GO" id="GO:0045892">
    <property type="term" value="P:negative regulation of DNA-templated transcription"/>
    <property type="evidence" value="ECO:0000314"/>
    <property type="project" value="UniProtKB"/>
</dbReference>
<dbReference type="GO" id="GO:0045986">
    <property type="term" value="P:negative regulation of smooth muscle contraction"/>
    <property type="evidence" value="ECO:0007669"/>
    <property type="project" value="Ensembl"/>
</dbReference>
<dbReference type="GO" id="GO:0007204">
    <property type="term" value="P:positive regulation of cytosolic calcium ion concentration"/>
    <property type="evidence" value="ECO:0000314"/>
    <property type="project" value="UniProtKB"/>
</dbReference>
<dbReference type="GO" id="GO:0051480">
    <property type="term" value="P:regulation of cytosolic calcium ion concentration"/>
    <property type="evidence" value="ECO:0000318"/>
    <property type="project" value="GO_Central"/>
</dbReference>
<dbReference type="GO" id="GO:0042311">
    <property type="term" value="P:vasodilation"/>
    <property type="evidence" value="ECO:0007669"/>
    <property type="project" value="Ensembl"/>
</dbReference>
<dbReference type="InterPro" id="IPR021118">
    <property type="entry name" value="Calcitonin"/>
</dbReference>
<dbReference type="InterPro" id="IPR021117">
    <property type="entry name" value="Calcitonin-like"/>
</dbReference>
<dbReference type="InterPro" id="IPR021116">
    <property type="entry name" value="Calcitonin/adrenomedullin"/>
</dbReference>
<dbReference type="InterPro" id="IPR018360">
    <property type="entry name" value="Calcitonin_CS"/>
</dbReference>
<dbReference type="InterPro" id="IPR001693">
    <property type="entry name" value="Calcitonin_peptide-like"/>
</dbReference>
<dbReference type="PANTHER" id="PTHR10505:SF16">
    <property type="entry name" value="CALCITONIN"/>
    <property type="match status" value="1"/>
</dbReference>
<dbReference type="PANTHER" id="PTHR10505">
    <property type="entry name" value="CALCITONIN-RELATED"/>
    <property type="match status" value="1"/>
</dbReference>
<dbReference type="Pfam" id="PF00214">
    <property type="entry name" value="Calc_CGRP_IAPP"/>
    <property type="match status" value="1"/>
</dbReference>
<dbReference type="PRINTS" id="PR00270">
    <property type="entry name" value="CALCITONINA"/>
</dbReference>
<dbReference type="SMART" id="SM00113">
    <property type="entry name" value="CALCITONIN"/>
    <property type="match status" value="1"/>
</dbReference>
<dbReference type="PROSITE" id="PS00258">
    <property type="entry name" value="CALCITONIN"/>
    <property type="match status" value="1"/>
</dbReference>
<sequence length="141" mass="15467">MGFQKFSPFLALSILVLLQAGSLHAAPFRSALESSPADPATLSEDEARLLLAALVQDYVQMKASELEQEQEREGSSLDSPRSKRCGNLSTCMLGTYTQDFNKFHTFPQTAIGVGAPGKKRDMSSDLERDHRPHVSMPQNAN</sequence>
<name>CALC_HUMAN</name>
<gene>
    <name evidence="15" type="primary">CALCA</name>
    <name type="synonym">CALC1</name>
</gene>